<name>TRUB_SALPA</name>
<protein>
    <recommendedName>
        <fullName evidence="1">tRNA pseudouridine synthase B</fullName>
        <ecNumber evidence="1">5.4.99.25</ecNumber>
    </recommendedName>
    <alternativeName>
        <fullName evidence="1">tRNA pseudouridine(55) synthase</fullName>
        <shortName evidence="1">Psi55 synthase</shortName>
    </alternativeName>
    <alternativeName>
        <fullName evidence="1">tRNA pseudouridylate synthase</fullName>
    </alternativeName>
    <alternativeName>
        <fullName evidence="1">tRNA-uridine isomerase</fullName>
    </alternativeName>
</protein>
<reference key="1">
    <citation type="journal article" date="2004" name="Nat. Genet.">
        <title>Comparison of genome degradation in Paratyphi A and Typhi, human-restricted serovars of Salmonella enterica that cause typhoid.</title>
        <authorList>
            <person name="McClelland M."/>
            <person name="Sanderson K.E."/>
            <person name="Clifton S.W."/>
            <person name="Latreille P."/>
            <person name="Porwollik S."/>
            <person name="Sabo A."/>
            <person name="Meyer R."/>
            <person name="Bieri T."/>
            <person name="Ozersky P."/>
            <person name="McLellan M."/>
            <person name="Harkins C.R."/>
            <person name="Wang C."/>
            <person name="Nguyen C."/>
            <person name="Berghoff A."/>
            <person name="Elliott G."/>
            <person name="Kohlberg S."/>
            <person name="Strong C."/>
            <person name="Du F."/>
            <person name="Carter J."/>
            <person name="Kremizki C."/>
            <person name="Layman D."/>
            <person name="Leonard S."/>
            <person name="Sun H."/>
            <person name="Fulton L."/>
            <person name="Nash W."/>
            <person name="Miner T."/>
            <person name="Minx P."/>
            <person name="Delehaunty K."/>
            <person name="Fronick C."/>
            <person name="Magrini V."/>
            <person name="Nhan M."/>
            <person name="Warren W."/>
            <person name="Florea L."/>
            <person name="Spieth J."/>
            <person name="Wilson R.K."/>
        </authorList>
    </citation>
    <scope>NUCLEOTIDE SEQUENCE [LARGE SCALE GENOMIC DNA]</scope>
    <source>
        <strain>ATCC 9150 / SARB42</strain>
    </source>
</reference>
<sequence>MSRPRRRGRDIHGVLLLDKPQGMSSNDVLQKVKRIYNANRAGHTGALDPLATGMLPICLGEATKFSQYLLDSDKRYRVIARLGQRTDTSDADGQIVQERPVTFSAEQLASALETFRGDIEQIPSMYSALKYQGKKLYEYARQGIEVPREARPITVYELLFIRHEGNELELEVHCSKGTYIRTIIDDLGEKLGCGAHVTYLRRLTVSKYPVDRMVTLEHLQTLVAQAEQQGVPAAQWLDPLLMPMDSPASDYPVVNLPLTSSVYFKNGNPVRTTGAPLKGLVRVTEGEDDKFIGMGEIDDEGRVAPRRLVVEYPA</sequence>
<keyword id="KW-0413">Isomerase</keyword>
<keyword id="KW-0819">tRNA processing</keyword>
<accession>Q5PLB2</accession>
<feature type="chain" id="PRO_0000121897" description="tRNA pseudouridine synthase B">
    <location>
        <begin position="1"/>
        <end position="314"/>
    </location>
</feature>
<feature type="active site" description="Nucleophile" evidence="1">
    <location>
        <position position="48"/>
    </location>
</feature>
<feature type="binding site" evidence="1">
    <location>
        <position position="43"/>
    </location>
    <ligand>
        <name>substrate</name>
    </ligand>
</feature>
<feature type="binding site" evidence="1">
    <location>
        <position position="76"/>
    </location>
    <ligand>
        <name>substrate</name>
    </ligand>
</feature>
<feature type="binding site" evidence="1">
    <location>
        <position position="179"/>
    </location>
    <ligand>
        <name>substrate</name>
    </ligand>
</feature>
<feature type="binding site" evidence="1">
    <location>
        <position position="200"/>
    </location>
    <ligand>
        <name>substrate</name>
    </ligand>
</feature>
<proteinExistence type="inferred from homology"/>
<dbReference type="EC" id="5.4.99.25" evidence="1"/>
<dbReference type="EMBL" id="CP000026">
    <property type="protein sequence ID" value="AAV78979.1"/>
    <property type="molecule type" value="Genomic_DNA"/>
</dbReference>
<dbReference type="RefSeq" id="WP_000089675.1">
    <property type="nucleotide sequence ID" value="NC_006511.1"/>
</dbReference>
<dbReference type="SMR" id="Q5PLB2"/>
<dbReference type="KEGG" id="spt:SPA3152"/>
<dbReference type="HOGENOM" id="CLU_032087_0_3_6"/>
<dbReference type="Proteomes" id="UP000008185">
    <property type="component" value="Chromosome"/>
</dbReference>
<dbReference type="GO" id="GO:0003723">
    <property type="term" value="F:RNA binding"/>
    <property type="evidence" value="ECO:0007669"/>
    <property type="project" value="InterPro"/>
</dbReference>
<dbReference type="GO" id="GO:0160148">
    <property type="term" value="F:tRNA pseudouridine(55) synthase activity"/>
    <property type="evidence" value="ECO:0007669"/>
    <property type="project" value="UniProtKB-EC"/>
</dbReference>
<dbReference type="GO" id="GO:1990481">
    <property type="term" value="P:mRNA pseudouridine synthesis"/>
    <property type="evidence" value="ECO:0007669"/>
    <property type="project" value="TreeGrafter"/>
</dbReference>
<dbReference type="GO" id="GO:0031119">
    <property type="term" value="P:tRNA pseudouridine synthesis"/>
    <property type="evidence" value="ECO:0007669"/>
    <property type="project" value="UniProtKB-UniRule"/>
</dbReference>
<dbReference type="CDD" id="cd02573">
    <property type="entry name" value="PseudoU_synth_EcTruB"/>
    <property type="match status" value="1"/>
</dbReference>
<dbReference type="CDD" id="cd21152">
    <property type="entry name" value="PUA_TruB_bacterial"/>
    <property type="match status" value="1"/>
</dbReference>
<dbReference type="FunFam" id="2.30.130.10:FF:000004">
    <property type="entry name" value="tRNA pseudouridine synthase B"/>
    <property type="match status" value="1"/>
</dbReference>
<dbReference type="FunFam" id="3.30.2350.10:FF:000003">
    <property type="entry name" value="tRNA pseudouridine synthase B"/>
    <property type="match status" value="1"/>
</dbReference>
<dbReference type="Gene3D" id="3.30.2350.10">
    <property type="entry name" value="Pseudouridine synthase"/>
    <property type="match status" value="1"/>
</dbReference>
<dbReference type="Gene3D" id="2.30.130.10">
    <property type="entry name" value="PUA domain"/>
    <property type="match status" value="1"/>
</dbReference>
<dbReference type="HAMAP" id="MF_01080">
    <property type="entry name" value="TruB_bact"/>
    <property type="match status" value="1"/>
</dbReference>
<dbReference type="InterPro" id="IPR020103">
    <property type="entry name" value="PsdUridine_synth_cat_dom_sf"/>
</dbReference>
<dbReference type="InterPro" id="IPR002501">
    <property type="entry name" value="PsdUridine_synth_N"/>
</dbReference>
<dbReference type="InterPro" id="IPR015947">
    <property type="entry name" value="PUA-like_sf"/>
</dbReference>
<dbReference type="InterPro" id="IPR036974">
    <property type="entry name" value="PUA_sf"/>
</dbReference>
<dbReference type="InterPro" id="IPR014780">
    <property type="entry name" value="tRNA_psdUridine_synth_TruB"/>
</dbReference>
<dbReference type="InterPro" id="IPR015240">
    <property type="entry name" value="tRNA_sdUridine_synth_fam1_C"/>
</dbReference>
<dbReference type="InterPro" id="IPR032819">
    <property type="entry name" value="TruB_C"/>
</dbReference>
<dbReference type="NCBIfam" id="TIGR00431">
    <property type="entry name" value="TruB"/>
    <property type="match status" value="1"/>
</dbReference>
<dbReference type="PANTHER" id="PTHR13767:SF2">
    <property type="entry name" value="PSEUDOURIDYLATE SYNTHASE TRUB1"/>
    <property type="match status" value="1"/>
</dbReference>
<dbReference type="PANTHER" id="PTHR13767">
    <property type="entry name" value="TRNA-PSEUDOURIDINE SYNTHASE"/>
    <property type="match status" value="1"/>
</dbReference>
<dbReference type="Pfam" id="PF09157">
    <property type="entry name" value="TruB-C_2"/>
    <property type="match status" value="1"/>
</dbReference>
<dbReference type="Pfam" id="PF16198">
    <property type="entry name" value="TruB_C_2"/>
    <property type="match status" value="1"/>
</dbReference>
<dbReference type="Pfam" id="PF01509">
    <property type="entry name" value="TruB_N"/>
    <property type="match status" value="1"/>
</dbReference>
<dbReference type="SUPFAM" id="SSF55120">
    <property type="entry name" value="Pseudouridine synthase"/>
    <property type="match status" value="1"/>
</dbReference>
<dbReference type="SUPFAM" id="SSF88697">
    <property type="entry name" value="PUA domain-like"/>
    <property type="match status" value="1"/>
</dbReference>
<evidence type="ECO:0000255" key="1">
    <source>
        <dbReference type="HAMAP-Rule" id="MF_01080"/>
    </source>
</evidence>
<comment type="function">
    <text evidence="1">Responsible for synthesis of pseudouridine from uracil-55 in the psi GC loop of transfer RNAs.</text>
</comment>
<comment type="catalytic activity">
    <reaction evidence="1">
        <text>uridine(55) in tRNA = pseudouridine(55) in tRNA</text>
        <dbReference type="Rhea" id="RHEA:42532"/>
        <dbReference type="Rhea" id="RHEA-COMP:10101"/>
        <dbReference type="Rhea" id="RHEA-COMP:10102"/>
        <dbReference type="ChEBI" id="CHEBI:65314"/>
        <dbReference type="ChEBI" id="CHEBI:65315"/>
        <dbReference type="EC" id="5.4.99.25"/>
    </reaction>
</comment>
<comment type="similarity">
    <text evidence="1">Belongs to the pseudouridine synthase TruB family. Type 1 subfamily.</text>
</comment>
<organism>
    <name type="scientific">Salmonella paratyphi A (strain ATCC 9150 / SARB42)</name>
    <dbReference type="NCBI Taxonomy" id="295319"/>
    <lineage>
        <taxon>Bacteria</taxon>
        <taxon>Pseudomonadati</taxon>
        <taxon>Pseudomonadota</taxon>
        <taxon>Gammaproteobacteria</taxon>
        <taxon>Enterobacterales</taxon>
        <taxon>Enterobacteriaceae</taxon>
        <taxon>Salmonella</taxon>
    </lineage>
</organism>
<gene>
    <name evidence="1" type="primary">truB</name>
    <name type="ordered locus">SPA3152</name>
</gene>